<comment type="function">
    <text evidence="1">Catalyzes the anti-1,4-elimination of the C-3 phosphate and the C-6 proR hydrogen from 5-enolpyruvylshikimate-3-phosphate (EPSP) to yield chorismate, which is the branch point compound that serves as the starting substrate for the three terminal pathways of aromatic amino acid biosynthesis. This reaction introduces a second double bond into the aromatic ring system.</text>
</comment>
<comment type="catalytic activity">
    <reaction evidence="1">
        <text>5-O-(1-carboxyvinyl)-3-phosphoshikimate = chorismate + phosphate</text>
        <dbReference type="Rhea" id="RHEA:21020"/>
        <dbReference type="ChEBI" id="CHEBI:29748"/>
        <dbReference type="ChEBI" id="CHEBI:43474"/>
        <dbReference type="ChEBI" id="CHEBI:57701"/>
        <dbReference type="EC" id="4.2.3.5"/>
    </reaction>
</comment>
<comment type="cofactor">
    <cofactor evidence="1">
        <name>FMNH2</name>
        <dbReference type="ChEBI" id="CHEBI:57618"/>
    </cofactor>
    <text evidence="1">Reduced FMN (FMNH(2)).</text>
</comment>
<comment type="pathway">
    <text evidence="1">Metabolic intermediate biosynthesis; chorismate biosynthesis; chorismate from D-erythrose 4-phosphate and phosphoenolpyruvate: step 7/7.</text>
</comment>
<comment type="subunit">
    <text evidence="1">Homotetramer.</text>
</comment>
<comment type="similarity">
    <text evidence="1">Belongs to the chorismate synthase family.</text>
</comment>
<comment type="sequence caution" evidence="2">
    <conflict type="erroneous initiation">
        <sequence resource="EMBL-CDS" id="AAA21830"/>
    </conflict>
    <text>Extended N-terminus.</text>
</comment>
<comment type="sequence caution" evidence="2">
    <conflict type="erroneous initiation">
        <sequence resource="EMBL-CDS" id="AEH32635"/>
    </conflict>
    <text>Extended N-terminus.</text>
</comment>
<protein>
    <recommendedName>
        <fullName evidence="1">Chorismate synthase</fullName>
        <shortName evidence="1">CS</shortName>
        <ecNumber evidence="1">4.2.3.5</ecNumber>
    </recommendedName>
    <alternativeName>
        <fullName evidence="1">5-enolpyruvylshikimate-3-phosphate phospholyase</fullName>
    </alternativeName>
</protein>
<organism>
    <name type="scientific">Vibrio anguillarum (strain ATCC 68554 / 775)</name>
    <name type="common">Listonella anguillarum</name>
    <dbReference type="NCBI Taxonomy" id="882102"/>
    <lineage>
        <taxon>Bacteria</taxon>
        <taxon>Pseudomonadati</taxon>
        <taxon>Pseudomonadota</taxon>
        <taxon>Gammaproteobacteria</taxon>
        <taxon>Vibrionales</taxon>
        <taxon>Vibrionaceae</taxon>
        <taxon>Vibrio</taxon>
    </lineage>
</organism>
<proteinExistence type="inferred from homology"/>
<gene>
    <name evidence="1" type="primary">aroC</name>
    <name type="ordered locus">VAA_03439</name>
</gene>
<dbReference type="EC" id="4.2.3.5" evidence="1"/>
<dbReference type="EMBL" id="L29562">
    <property type="protein sequence ID" value="AAA21830.1"/>
    <property type="status" value="ALT_INIT"/>
    <property type="molecule type" value="Genomic_DNA"/>
</dbReference>
<dbReference type="EMBL" id="CP002284">
    <property type="protein sequence ID" value="AEH32635.1"/>
    <property type="status" value="ALT_INIT"/>
    <property type="molecule type" value="Genomic_DNA"/>
</dbReference>
<dbReference type="RefSeq" id="WP_041945924.1">
    <property type="nucleotide sequence ID" value="NC_015633.1"/>
</dbReference>
<dbReference type="SMR" id="P39198"/>
<dbReference type="KEGG" id="van:VAA_03439"/>
<dbReference type="PATRIC" id="fig|882102.3.peg.1055"/>
<dbReference type="eggNOG" id="COG0082">
    <property type="taxonomic scope" value="Bacteria"/>
</dbReference>
<dbReference type="HOGENOM" id="CLU_034547_0_2_6"/>
<dbReference type="UniPathway" id="UPA00053">
    <property type="reaction ID" value="UER00090"/>
</dbReference>
<dbReference type="GO" id="GO:0005829">
    <property type="term" value="C:cytosol"/>
    <property type="evidence" value="ECO:0007669"/>
    <property type="project" value="TreeGrafter"/>
</dbReference>
<dbReference type="GO" id="GO:0004107">
    <property type="term" value="F:chorismate synthase activity"/>
    <property type="evidence" value="ECO:0007669"/>
    <property type="project" value="UniProtKB-UniRule"/>
</dbReference>
<dbReference type="GO" id="GO:0010181">
    <property type="term" value="F:FMN binding"/>
    <property type="evidence" value="ECO:0007669"/>
    <property type="project" value="TreeGrafter"/>
</dbReference>
<dbReference type="GO" id="GO:0008652">
    <property type="term" value="P:amino acid biosynthetic process"/>
    <property type="evidence" value="ECO:0007669"/>
    <property type="project" value="UniProtKB-KW"/>
</dbReference>
<dbReference type="GO" id="GO:0009073">
    <property type="term" value="P:aromatic amino acid family biosynthetic process"/>
    <property type="evidence" value="ECO:0007669"/>
    <property type="project" value="UniProtKB-KW"/>
</dbReference>
<dbReference type="GO" id="GO:0009423">
    <property type="term" value="P:chorismate biosynthetic process"/>
    <property type="evidence" value="ECO:0007669"/>
    <property type="project" value="UniProtKB-UniRule"/>
</dbReference>
<dbReference type="CDD" id="cd07304">
    <property type="entry name" value="Chorismate_synthase"/>
    <property type="match status" value="1"/>
</dbReference>
<dbReference type="FunFam" id="3.60.150.10:FF:000001">
    <property type="entry name" value="Chorismate synthase"/>
    <property type="match status" value="1"/>
</dbReference>
<dbReference type="Gene3D" id="3.60.150.10">
    <property type="entry name" value="Chorismate synthase AroC"/>
    <property type="match status" value="1"/>
</dbReference>
<dbReference type="HAMAP" id="MF_00300">
    <property type="entry name" value="Chorismate_synth"/>
    <property type="match status" value="1"/>
</dbReference>
<dbReference type="InterPro" id="IPR000453">
    <property type="entry name" value="Chorismate_synth"/>
</dbReference>
<dbReference type="InterPro" id="IPR035904">
    <property type="entry name" value="Chorismate_synth_AroC_sf"/>
</dbReference>
<dbReference type="InterPro" id="IPR020541">
    <property type="entry name" value="Chorismate_synthase_CS"/>
</dbReference>
<dbReference type="NCBIfam" id="TIGR00033">
    <property type="entry name" value="aroC"/>
    <property type="match status" value="1"/>
</dbReference>
<dbReference type="NCBIfam" id="NF003793">
    <property type="entry name" value="PRK05382.1"/>
    <property type="match status" value="1"/>
</dbReference>
<dbReference type="PANTHER" id="PTHR21085">
    <property type="entry name" value="CHORISMATE SYNTHASE"/>
    <property type="match status" value="1"/>
</dbReference>
<dbReference type="PANTHER" id="PTHR21085:SF0">
    <property type="entry name" value="CHORISMATE SYNTHASE"/>
    <property type="match status" value="1"/>
</dbReference>
<dbReference type="Pfam" id="PF01264">
    <property type="entry name" value="Chorismate_synt"/>
    <property type="match status" value="1"/>
</dbReference>
<dbReference type="PIRSF" id="PIRSF001456">
    <property type="entry name" value="Chorismate_synth"/>
    <property type="match status" value="1"/>
</dbReference>
<dbReference type="SUPFAM" id="SSF103263">
    <property type="entry name" value="Chorismate synthase, AroC"/>
    <property type="match status" value="1"/>
</dbReference>
<dbReference type="PROSITE" id="PS00787">
    <property type="entry name" value="CHORISMATE_SYNTHASE_1"/>
    <property type="match status" value="1"/>
</dbReference>
<dbReference type="PROSITE" id="PS00788">
    <property type="entry name" value="CHORISMATE_SYNTHASE_2"/>
    <property type="match status" value="1"/>
</dbReference>
<dbReference type="PROSITE" id="PS00789">
    <property type="entry name" value="CHORISMATE_SYNTHASE_3"/>
    <property type="match status" value="1"/>
</dbReference>
<name>AROC_VIBA7</name>
<reference key="1">
    <citation type="journal article" date="1994" name="J. Bacteriol.">
        <title>Chromosome-mediated 2,3-dihydroxybenzoic acid is a precursor in the biosynthesis of the plasmid-mediated siderophore anguibactin in Vibrio anguillarum.</title>
        <authorList>
            <person name="Chen Q."/>
            <person name="Actis L.A."/>
            <person name="Tolmasky M.E."/>
            <person name="Crosa J.H."/>
        </authorList>
    </citation>
    <scope>NUCLEOTIDE SEQUENCE [GENOMIC DNA]</scope>
    <source>
        <strain>ATCC 68554 / 775</strain>
    </source>
</reference>
<reference key="2">
    <citation type="journal article" date="2011" name="Infect. Immun.">
        <title>Complete genome sequence of the marine fish pathogen Vibrio anguillarum harboring the pJM1 virulence plasmid and genomic comparison with other virulent strains of V. anguillarum and V. ordalii.</title>
        <authorList>
            <person name="Naka H."/>
            <person name="Dias G.M."/>
            <person name="Thompson C.C."/>
            <person name="Dubay C."/>
            <person name="Thompson F.L."/>
            <person name="Crosa J.H."/>
        </authorList>
    </citation>
    <scope>NUCLEOTIDE SEQUENCE [LARGE SCALE GENOMIC DNA]</scope>
    <source>
        <strain>ATCC 68554 / 775</strain>
    </source>
</reference>
<keyword id="KW-0028">Amino-acid biosynthesis</keyword>
<keyword id="KW-0057">Aromatic amino acid biosynthesis</keyword>
<keyword id="KW-0274">FAD</keyword>
<keyword id="KW-0285">Flavoprotein</keyword>
<keyword id="KW-0288">FMN</keyword>
<keyword id="KW-0456">Lyase</keyword>
<keyword id="KW-0521">NADP</keyword>
<feature type="chain" id="PRO_0000140671" description="Chorismate synthase">
    <location>
        <begin position="1"/>
        <end position="361"/>
    </location>
</feature>
<feature type="binding site" evidence="1">
    <location>
        <position position="48"/>
    </location>
    <ligand>
        <name>NADP(+)</name>
        <dbReference type="ChEBI" id="CHEBI:58349"/>
    </ligand>
</feature>
<feature type="binding site" evidence="1">
    <location>
        <begin position="125"/>
        <end position="127"/>
    </location>
    <ligand>
        <name>FMN</name>
        <dbReference type="ChEBI" id="CHEBI:58210"/>
    </ligand>
</feature>
<feature type="binding site" evidence="1">
    <location>
        <begin position="238"/>
        <end position="239"/>
    </location>
    <ligand>
        <name>FMN</name>
        <dbReference type="ChEBI" id="CHEBI:58210"/>
    </ligand>
</feature>
<feature type="binding site" evidence="1">
    <location>
        <position position="278"/>
    </location>
    <ligand>
        <name>FMN</name>
        <dbReference type="ChEBI" id="CHEBI:58210"/>
    </ligand>
</feature>
<feature type="binding site" evidence="1">
    <location>
        <begin position="293"/>
        <end position="297"/>
    </location>
    <ligand>
        <name>FMN</name>
        <dbReference type="ChEBI" id="CHEBI:58210"/>
    </ligand>
</feature>
<feature type="binding site" evidence="1">
    <location>
        <position position="319"/>
    </location>
    <ligand>
        <name>FMN</name>
        <dbReference type="ChEBI" id="CHEBI:58210"/>
    </ligand>
</feature>
<feature type="sequence conflict" description="In Ref. 1; AAA21830." evidence="2" ref="1">
    <original>L</original>
    <variation>R</variation>
    <location>
        <position position="54"/>
    </location>
</feature>
<accession>P39198</accession>
<accession>F7YND6</accession>
<sequence>MAGNSIGQHFRVMTFGESHGIALGCIVDGCPPGLEITEADLQIDLDRRRPGTSLYTTQRREADEVKILSGVFEGKTTGTSIGLLIENTDQRSTDYSDIKDKFRPGHADYTYHQKYGIRDYRGGGRSSARETAMRVAAGAIAKKYLKQEFGVEIRAYLSQMGDVCIDKVDWNEIENNAFFCPDADKVAAFDQLIRDLKKEGDSIGAKIQVVATNLPVGLGEPVFDRLDADIAHALMSINAVKGVEIGDGFDVVQQKGSQHRDPLTPNGFRSNHAGGILGGISTGQDIVASIALKPTSSITVPGDTITRTGEPTQLITKGRHDPCVGIRAVPIAEAMLAIVLMDHLLRHRGQNFAVQTETPKI</sequence>
<evidence type="ECO:0000255" key="1">
    <source>
        <dbReference type="HAMAP-Rule" id="MF_00300"/>
    </source>
</evidence>
<evidence type="ECO:0000305" key="2"/>